<proteinExistence type="inferred from homology"/>
<reference key="1">
    <citation type="journal article" date="2008" name="Chem. Biol. Interact.">
        <title>Extending the Bacillus cereus group genomics to putative food-borne pathogens of different toxicity.</title>
        <authorList>
            <person name="Lapidus A."/>
            <person name="Goltsman E."/>
            <person name="Auger S."/>
            <person name="Galleron N."/>
            <person name="Segurens B."/>
            <person name="Dossat C."/>
            <person name="Land M.L."/>
            <person name="Broussolle V."/>
            <person name="Brillard J."/>
            <person name="Guinebretiere M.-H."/>
            <person name="Sanchis V."/>
            <person name="Nguen-the C."/>
            <person name="Lereclus D."/>
            <person name="Richardson P."/>
            <person name="Wincker P."/>
            <person name="Weissenbach J."/>
            <person name="Ehrlich S.D."/>
            <person name="Sorokin A."/>
        </authorList>
    </citation>
    <scope>NUCLEOTIDE SEQUENCE [LARGE SCALE GENOMIC DNA]</scope>
    <source>
        <strain>KBAB4</strain>
    </source>
</reference>
<gene>
    <name evidence="1" type="primary">rplQ</name>
    <name type="ordered locus">BcerKBAB4_0133</name>
</gene>
<organism>
    <name type="scientific">Bacillus mycoides (strain KBAB4)</name>
    <name type="common">Bacillus weihenstephanensis</name>
    <dbReference type="NCBI Taxonomy" id="315730"/>
    <lineage>
        <taxon>Bacteria</taxon>
        <taxon>Bacillati</taxon>
        <taxon>Bacillota</taxon>
        <taxon>Bacilli</taxon>
        <taxon>Bacillales</taxon>
        <taxon>Bacillaceae</taxon>
        <taxon>Bacillus</taxon>
        <taxon>Bacillus cereus group</taxon>
    </lineage>
</organism>
<keyword id="KW-0687">Ribonucleoprotein</keyword>
<keyword id="KW-0689">Ribosomal protein</keyword>
<feature type="chain" id="PRO_1000144378" description="Large ribosomal subunit protein bL17">
    <location>
        <begin position="1"/>
        <end position="120"/>
    </location>
</feature>
<accession>A9VPA5</accession>
<name>RL17_BACMK</name>
<comment type="subunit">
    <text evidence="1">Part of the 50S ribosomal subunit. Contacts protein L32.</text>
</comment>
<comment type="similarity">
    <text evidence="1">Belongs to the bacterial ribosomal protein bL17 family.</text>
</comment>
<evidence type="ECO:0000255" key="1">
    <source>
        <dbReference type="HAMAP-Rule" id="MF_01368"/>
    </source>
</evidence>
<evidence type="ECO:0000305" key="2"/>
<dbReference type="EMBL" id="CP000903">
    <property type="protein sequence ID" value="ABY41402.1"/>
    <property type="molecule type" value="Genomic_DNA"/>
</dbReference>
<dbReference type="RefSeq" id="WP_000331490.1">
    <property type="nucleotide sequence ID" value="NZ_CAKMRX030000129.1"/>
</dbReference>
<dbReference type="SMR" id="A9VPA5"/>
<dbReference type="GeneID" id="93010915"/>
<dbReference type="KEGG" id="bwe:BcerKBAB4_0133"/>
<dbReference type="eggNOG" id="COG0203">
    <property type="taxonomic scope" value="Bacteria"/>
</dbReference>
<dbReference type="HOGENOM" id="CLU_074407_2_2_9"/>
<dbReference type="Proteomes" id="UP000002154">
    <property type="component" value="Chromosome"/>
</dbReference>
<dbReference type="GO" id="GO:0022625">
    <property type="term" value="C:cytosolic large ribosomal subunit"/>
    <property type="evidence" value="ECO:0007669"/>
    <property type="project" value="TreeGrafter"/>
</dbReference>
<dbReference type="GO" id="GO:0003735">
    <property type="term" value="F:structural constituent of ribosome"/>
    <property type="evidence" value="ECO:0007669"/>
    <property type="project" value="InterPro"/>
</dbReference>
<dbReference type="GO" id="GO:0006412">
    <property type="term" value="P:translation"/>
    <property type="evidence" value="ECO:0007669"/>
    <property type="project" value="UniProtKB-UniRule"/>
</dbReference>
<dbReference type="FunFam" id="3.90.1030.10:FF:000002">
    <property type="entry name" value="50S ribosomal protein L17"/>
    <property type="match status" value="1"/>
</dbReference>
<dbReference type="Gene3D" id="3.90.1030.10">
    <property type="entry name" value="Ribosomal protein L17"/>
    <property type="match status" value="1"/>
</dbReference>
<dbReference type="HAMAP" id="MF_01368">
    <property type="entry name" value="Ribosomal_bL17"/>
    <property type="match status" value="1"/>
</dbReference>
<dbReference type="InterPro" id="IPR000456">
    <property type="entry name" value="Ribosomal_bL17"/>
</dbReference>
<dbReference type="InterPro" id="IPR047859">
    <property type="entry name" value="Ribosomal_bL17_CS"/>
</dbReference>
<dbReference type="InterPro" id="IPR036373">
    <property type="entry name" value="Ribosomal_bL17_sf"/>
</dbReference>
<dbReference type="NCBIfam" id="TIGR00059">
    <property type="entry name" value="L17"/>
    <property type="match status" value="1"/>
</dbReference>
<dbReference type="PANTHER" id="PTHR14413:SF16">
    <property type="entry name" value="LARGE RIBOSOMAL SUBUNIT PROTEIN BL17M"/>
    <property type="match status" value="1"/>
</dbReference>
<dbReference type="PANTHER" id="PTHR14413">
    <property type="entry name" value="RIBOSOMAL PROTEIN L17"/>
    <property type="match status" value="1"/>
</dbReference>
<dbReference type="Pfam" id="PF01196">
    <property type="entry name" value="Ribosomal_L17"/>
    <property type="match status" value="1"/>
</dbReference>
<dbReference type="SUPFAM" id="SSF64263">
    <property type="entry name" value="Prokaryotic ribosomal protein L17"/>
    <property type="match status" value="1"/>
</dbReference>
<dbReference type="PROSITE" id="PS01167">
    <property type="entry name" value="RIBOSOMAL_L17"/>
    <property type="match status" value="1"/>
</dbReference>
<sequence length="120" mass="13450">MAYRKLGRTSAQRKAMLRDLATDLIINERIQTTETRAKELRSVVEKMITLGKRGDLHARRQAAAFIRNEVANAETGQDALQKLFADVAPRYAERQGGYTRIAKIGPRRGDAAPMVIIELV</sequence>
<protein>
    <recommendedName>
        <fullName evidence="1">Large ribosomal subunit protein bL17</fullName>
    </recommendedName>
    <alternativeName>
        <fullName evidence="2">50S ribosomal protein L17</fullName>
    </alternativeName>
</protein>